<sequence>MDFLNEIASKWQKVWDSERVYEADVDRTKEKKFITVAFPYTNSPLHIGHGRTYITADIYARYLRMKGYNVLFPFAFQFTGTPILSIADAVKRGDEEIISTFTNVYQIPIGVISKFSDPSYLSAYFKEDMRNTALTLGLSIDRRREFTTIDPAFERFVQWQYKRLQEIGYIKKEKAPVAYCPVDEFPVGMHDTRGDIEPEIIDLDVIYFQGEKLLFLTATSRPETIFGAVAILINPDSDYSIVVDNKNGKRLVMSTEAFKKLSFQMSLTEEERKKGGELIGLNVTNPVTLKKLTVLPSKYVESKQGTGVVMAVPAHEPLHYLALSELKESFEIVPVIKSEDYGDFPAMEVLETAQTTSAQELKDYIDTLYRIEFHKGSIRDEVVDLVPDYMKQFVGERIAGKSVREARSSVVELLRNLGVHGNIYEIINGPVYCRCGAEVVVKVFDDQWFIDYSNSTWKSSVLKSLDKIEILPQDAKREISKIIFNMKPRPFTRSRGLGVRLPWDDRQIIDSLSDSTIYTVFYIVANKVKSYPTSILNERFWDYVVLGRGDSSQLSRELGIPKEQLEELRMEVEYWYPVDSRHSGRDLVQNHIPYYLYHHVGVLGEDKVPKRIVLNGFIRVGGKKMSKSFGNVYPLNKAIREYGVDTVRLALTSTSSLSDDIEFSPNIAKSIGEQLKHIHDFIENLIKLQSVNEIRKVDLWISSLISEYIDLIDNCLSNLDLRTAYKTIYYDIYEDLKDYLELGNGKINSDIIKNVISVWIRLMAPFTPHLAEELWHKLDNSLVVRQRFPSKGELQYDKRALLEIEYLRYTIDLINSMKSKMSKEPETVIIYVNEDNTQRDLIRKAIESLKERKSLPDFEKEVGDREMARLAYEIAGDLPDKIKNLAEIGINESEILTSNAQFLLNKLDVKEIYIYNSKDPSTPDIKGKKSIALPYKPGIILT</sequence>
<reference key="1">
    <citation type="journal article" date="2005" name="J. Bacteriol.">
        <title>The genome of Sulfolobus acidocaldarius, a model organism of the Crenarchaeota.</title>
        <authorList>
            <person name="Chen L."/>
            <person name="Bruegger K."/>
            <person name="Skovgaard M."/>
            <person name="Redder P."/>
            <person name="She Q."/>
            <person name="Torarinsson E."/>
            <person name="Greve B."/>
            <person name="Awayez M."/>
            <person name="Zibat A."/>
            <person name="Klenk H.-P."/>
            <person name="Garrett R.A."/>
        </authorList>
    </citation>
    <scope>NUCLEOTIDE SEQUENCE [LARGE SCALE GENOMIC DNA]</scope>
    <source>
        <strain>ATCC 33909 / DSM 639 / JCM 8929 / NBRC 15157 / NCIMB 11770</strain>
    </source>
</reference>
<dbReference type="EC" id="6.1.1.4" evidence="1"/>
<dbReference type="EMBL" id="CP000077">
    <property type="protein sequence ID" value="AAY79789.1"/>
    <property type="molecule type" value="Genomic_DNA"/>
</dbReference>
<dbReference type="RefSeq" id="WP_011277291.1">
    <property type="nucleotide sequence ID" value="NC_007181.1"/>
</dbReference>
<dbReference type="SMR" id="Q4JBP0"/>
<dbReference type="STRING" id="330779.Saci_0373"/>
<dbReference type="GeneID" id="14550902"/>
<dbReference type="KEGG" id="sai:Saci_0373"/>
<dbReference type="PATRIC" id="fig|330779.12.peg.371"/>
<dbReference type="eggNOG" id="arCOG00809">
    <property type="taxonomic scope" value="Archaea"/>
</dbReference>
<dbReference type="HOGENOM" id="CLU_004174_0_0_2"/>
<dbReference type="Proteomes" id="UP000001018">
    <property type="component" value="Chromosome"/>
</dbReference>
<dbReference type="GO" id="GO:0005737">
    <property type="term" value="C:cytoplasm"/>
    <property type="evidence" value="ECO:0007669"/>
    <property type="project" value="UniProtKB-SubCell"/>
</dbReference>
<dbReference type="GO" id="GO:0002161">
    <property type="term" value="F:aminoacyl-tRNA deacylase activity"/>
    <property type="evidence" value="ECO:0007669"/>
    <property type="project" value="InterPro"/>
</dbReference>
<dbReference type="GO" id="GO:0005524">
    <property type="term" value="F:ATP binding"/>
    <property type="evidence" value="ECO:0007669"/>
    <property type="project" value="UniProtKB-UniRule"/>
</dbReference>
<dbReference type="GO" id="GO:0004823">
    <property type="term" value="F:leucine-tRNA ligase activity"/>
    <property type="evidence" value="ECO:0007669"/>
    <property type="project" value="UniProtKB-UniRule"/>
</dbReference>
<dbReference type="GO" id="GO:0006429">
    <property type="term" value="P:leucyl-tRNA aminoacylation"/>
    <property type="evidence" value="ECO:0007669"/>
    <property type="project" value="UniProtKB-UniRule"/>
</dbReference>
<dbReference type="CDD" id="cd07959">
    <property type="entry name" value="Anticodon_Ia_Leu_AEc"/>
    <property type="match status" value="1"/>
</dbReference>
<dbReference type="Gene3D" id="3.30.2320.20">
    <property type="entry name" value="Class I aminoacyl-tRNA synthetases (RS)"/>
    <property type="match status" value="1"/>
</dbReference>
<dbReference type="Gene3D" id="3.40.50.620">
    <property type="entry name" value="HUPs"/>
    <property type="match status" value="1"/>
</dbReference>
<dbReference type="Gene3D" id="1.10.730.10">
    <property type="entry name" value="Isoleucyl-tRNA Synthetase, Domain 1"/>
    <property type="match status" value="1"/>
</dbReference>
<dbReference type="Gene3D" id="1.10.10.720">
    <property type="entry name" value="leucyl-tRNA synthetase"/>
    <property type="match status" value="1"/>
</dbReference>
<dbReference type="Gene3D" id="3.90.740.10">
    <property type="entry name" value="Valyl/Leucyl/Isoleucyl-tRNA synthetase, editing domain"/>
    <property type="match status" value="1"/>
</dbReference>
<dbReference type="HAMAP" id="MF_00049_A">
    <property type="entry name" value="Leu_tRNA_synth_A"/>
    <property type="match status" value="1"/>
</dbReference>
<dbReference type="InterPro" id="IPR002300">
    <property type="entry name" value="aa-tRNA-synth_Ia"/>
</dbReference>
<dbReference type="InterPro" id="IPR020791">
    <property type="entry name" value="Leu-tRNA-lgase_arc"/>
</dbReference>
<dbReference type="InterPro" id="IPR004493">
    <property type="entry name" value="Leu-tRNA-synth_Ia_arc/euk"/>
</dbReference>
<dbReference type="InterPro" id="IPR013155">
    <property type="entry name" value="M/V/L/I-tRNA-synth_anticd-bd"/>
</dbReference>
<dbReference type="InterPro" id="IPR014729">
    <property type="entry name" value="Rossmann-like_a/b/a_fold"/>
</dbReference>
<dbReference type="InterPro" id="IPR009080">
    <property type="entry name" value="tRNAsynth_Ia_anticodon-bd"/>
</dbReference>
<dbReference type="InterPro" id="IPR009008">
    <property type="entry name" value="Val/Leu/Ile-tRNA-synth_edit"/>
</dbReference>
<dbReference type="NCBIfam" id="TIGR00395">
    <property type="entry name" value="leuS_arch"/>
    <property type="match status" value="1"/>
</dbReference>
<dbReference type="NCBIfam" id="NF008957">
    <property type="entry name" value="PRK12300.1"/>
    <property type="match status" value="1"/>
</dbReference>
<dbReference type="PANTHER" id="PTHR45794:SF1">
    <property type="entry name" value="LEUCINE--TRNA LIGASE, CYTOPLASMIC"/>
    <property type="match status" value="1"/>
</dbReference>
<dbReference type="PANTHER" id="PTHR45794">
    <property type="entry name" value="LEUCYL-TRNA SYNTHETASE"/>
    <property type="match status" value="1"/>
</dbReference>
<dbReference type="Pfam" id="PF08264">
    <property type="entry name" value="Anticodon_1"/>
    <property type="match status" value="1"/>
</dbReference>
<dbReference type="Pfam" id="PF00133">
    <property type="entry name" value="tRNA-synt_1"/>
    <property type="match status" value="2"/>
</dbReference>
<dbReference type="SUPFAM" id="SSF47323">
    <property type="entry name" value="Anticodon-binding domain of a subclass of class I aminoacyl-tRNA synthetases"/>
    <property type="match status" value="1"/>
</dbReference>
<dbReference type="SUPFAM" id="SSF52374">
    <property type="entry name" value="Nucleotidylyl transferase"/>
    <property type="match status" value="1"/>
</dbReference>
<dbReference type="SUPFAM" id="SSF50677">
    <property type="entry name" value="ValRS/IleRS/LeuRS editing domain"/>
    <property type="match status" value="1"/>
</dbReference>
<proteinExistence type="inferred from homology"/>
<keyword id="KW-0030">Aminoacyl-tRNA synthetase</keyword>
<keyword id="KW-0067">ATP-binding</keyword>
<keyword id="KW-0963">Cytoplasm</keyword>
<keyword id="KW-0436">Ligase</keyword>
<keyword id="KW-0547">Nucleotide-binding</keyword>
<keyword id="KW-0648">Protein biosynthesis</keyword>
<keyword id="KW-1185">Reference proteome</keyword>
<gene>
    <name evidence="1" type="primary">leuS1</name>
    <name type="ordered locus">Saci_0373</name>
</gene>
<feature type="chain" id="PRO_0000152142" description="Leucine--tRNA ligase 1">
    <location>
        <begin position="1"/>
        <end position="942"/>
    </location>
</feature>
<feature type="short sequence motif" description="'HIGH' region">
    <location>
        <begin position="39"/>
        <end position="49"/>
    </location>
</feature>
<feature type="short sequence motif" description="'KMSKS' region">
    <location>
        <begin position="624"/>
        <end position="628"/>
    </location>
</feature>
<feature type="binding site" evidence="1">
    <location>
        <position position="627"/>
    </location>
    <ligand>
        <name>ATP</name>
        <dbReference type="ChEBI" id="CHEBI:30616"/>
    </ligand>
</feature>
<name>SYL1_SULAC</name>
<evidence type="ECO:0000255" key="1">
    <source>
        <dbReference type="HAMAP-Rule" id="MF_00049"/>
    </source>
</evidence>
<comment type="catalytic activity">
    <reaction evidence="1">
        <text>tRNA(Leu) + L-leucine + ATP = L-leucyl-tRNA(Leu) + AMP + diphosphate</text>
        <dbReference type="Rhea" id="RHEA:11688"/>
        <dbReference type="Rhea" id="RHEA-COMP:9613"/>
        <dbReference type="Rhea" id="RHEA-COMP:9622"/>
        <dbReference type="ChEBI" id="CHEBI:30616"/>
        <dbReference type="ChEBI" id="CHEBI:33019"/>
        <dbReference type="ChEBI" id="CHEBI:57427"/>
        <dbReference type="ChEBI" id="CHEBI:78442"/>
        <dbReference type="ChEBI" id="CHEBI:78494"/>
        <dbReference type="ChEBI" id="CHEBI:456215"/>
        <dbReference type="EC" id="6.1.1.4"/>
    </reaction>
</comment>
<comment type="subcellular location">
    <subcellularLocation>
        <location evidence="1">Cytoplasm</location>
    </subcellularLocation>
</comment>
<comment type="similarity">
    <text evidence="1">Belongs to the class-I aminoacyl-tRNA synthetase family.</text>
</comment>
<protein>
    <recommendedName>
        <fullName evidence="1">Leucine--tRNA ligase 1</fullName>
        <ecNumber evidence="1">6.1.1.4</ecNumber>
    </recommendedName>
    <alternativeName>
        <fullName evidence="1">Leucyl-tRNA synthetase 1</fullName>
        <shortName evidence="1">LeuRS 1</shortName>
    </alternativeName>
</protein>
<accession>Q4JBP0</accession>
<organism>
    <name type="scientific">Sulfolobus acidocaldarius (strain ATCC 33909 / DSM 639 / JCM 8929 / NBRC 15157 / NCIMB 11770)</name>
    <dbReference type="NCBI Taxonomy" id="330779"/>
    <lineage>
        <taxon>Archaea</taxon>
        <taxon>Thermoproteota</taxon>
        <taxon>Thermoprotei</taxon>
        <taxon>Sulfolobales</taxon>
        <taxon>Sulfolobaceae</taxon>
        <taxon>Sulfolobus</taxon>
    </lineage>
</organism>